<sequence length="515" mass="55597">MSLTIPSPIAATTPSAASMTAGEPKTYQVRTFGCQMNVHDSERMAGLLEEAGYVPADGEVADVVVFNTCAVRENADNKLYGNLGQLRQVKEANPGMQIAVGGCLAQKDRETIVKKAPWVDAVFGTHNVGALPALLNRARHNNEAQLEILESLDVFPSTLPTKRDSVYAGWVSISVGCNNTCTFCIVPSLRGKEKDRRPGEILAEIQALVDDGAVEVTLLGQNVNSYGVEFGDRQAFSKLLRACGEIEGLERVRFTSPHPAAFTDDVIDAMAETHNAMPQLHMPLQSGSDKVLKDMRRSYRSSKFLGILDKVRDRIPHAAITTDIIVGFPGETEEDFQATLDVVEKSRFASAFTFQYSKRPGTPAADLPEQLPKAVVQERYERLTALQDRIAAEENAKQLGRKVEVLVTAQSGRKAGETHRLSGRSKDQRLVHFSVPAGAEAPRPGDFVTVTITEAAAFHLVADPAGADDYLLRRSRAGDAWDRSQADSCGVPAAGAASGKAGVSLGMPSLPTRRA</sequence>
<name>MIAB_PAEAT</name>
<gene>
    <name evidence="1" type="primary">miaB</name>
    <name type="ordered locus">AAur_1596</name>
</gene>
<proteinExistence type="inferred from homology"/>
<accession>A1R550</accession>
<organism>
    <name type="scientific">Paenarthrobacter aurescens (strain TC1)</name>
    <dbReference type="NCBI Taxonomy" id="290340"/>
    <lineage>
        <taxon>Bacteria</taxon>
        <taxon>Bacillati</taxon>
        <taxon>Actinomycetota</taxon>
        <taxon>Actinomycetes</taxon>
        <taxon>Micrococcales</taxon>
        <taxon>Micrococcaceae</taxon>
        <taxon>Paenarthrobacter</taxon>
    </lineage>
</organism>
<feature type="chain" id="PRO_0000374117" description="tRNA-2-methylthio-N(6)-dimethylallyladenosine synthase">
    <location>
        <begin position="1"/>
        <end position="515"/>
    </location>
</feature>
<feature type="domain" description="MTTase N-terminal" evidence="1">
    <location>
        <begin position="25"/>
        <end position="140"/>
    </location>
</feature>
<feature type="domain" description="Radical SAM core" evidence="2">
    <location>
        <begin position="163"/>
        <end position="393"/>
    </location>
</feature>
<feature type="domain" description="TRAM" evidence="1">
    <location>
        <begin position="396"/>
        <end position="466"/>
    </location>
</feature>
<feature type="region of interest" description="Disordered" evidence="3">
    <location>
        <begin position="482"/>
        <end position="515"/>
    </location>
</feature>
<feature type="compositionally biased region" description="Low complexity" evidence="3">
    <location>
        <begin position="490"/>
        <end position="506"/>
    </location>
</feature>
<feature type="binding site" evidence="1">
    <location>
        <position position="34"/>
    </location>
    <ligand>
        <name>[4Fe-4S] cluster</name>
        <dbReference type="ChEBI" id="CHEBI:49883"/>
        <label>1</label>
    </ligand>
</feature>
<feature type="binding site" evidence="1">
    <location>
        <position position="69"/>
    </location>
    <ligand>
        <name>[4Fe-4S] cluster</name>
        <dbReference type="ChEBI" id="CHEBI:49883"/>
        <label>1</label>
    </ligand>
</feature>
<feature type="binding site" evidence="1">
    <location>
        <position position="103"/>
    </location>
    <ligand>
        <name>[4Fe-4S] cluster</name>
        <dbReference type="ChEBI" id="CHEBI:49883"/>
        <label>1</label>
    </ligand>
</feature>
<feature type="binding site" evidence="1">
    <location>
        <position position="177"/>
    </location>
    <ligand>
        <name>[4Fe-4S] cluster</name>
        <dbReference type="ChEBI" id="CHEBI:49883"/>
        <label>2</label>
        <note>4Fe-4S-S-AdoMet</note>
    </ligand>
</feature>
<feature type="binding site" evidence="1">
    <location>
        <position position="181"/>
    </location>
    <ligand>
        <name>[4Fe-4S] cluster</name>
        <dbReference type="ChEBI" id="CHEBI:49883"/>
        <label>2</label>
        <note>4Fe-4S-S-AdoMet</note>
    </ligand>
</feature>
<feature type="binding site" evidence="1">
    <location>
        <position position="184"/>
    </location>
    <ligand>
        <name>[4Fe-4S] cluster</name>
        <dbReference type="ChEBI" id="CHEBI:49883"/>
        <label>2</label>
        <note>4Fe-4S-S-AdoMet</note>
    </ligand>
</feature>
<comment type="function">
    <text evidence="1">Catalyzes the methylthiolation of N6-(dimethylallyl)adenosine (i(6)A), leading to the formation of 2-methylthio-N6-(dimethylallyl)adenosine (ms(2)i(6)A) at position 37 in tRNAs that read codons beginning with uridine.</text>
</comment>
<comment type="catalytic activity">
    <reaction evidence="1">
        <text>N(6)-dimethylallyladenosine(37) in tRNA + (sulfur carrier)-SH + AH2 + 2 S-adenosyl-L-methionine = 2-methylsulfanyl-N(6)-dimethylallyladenosine(37) in tRNA + (sulfur carrier)-H + 5'-deoxyadenosine + L-methionine + A + S-adenosyl-L-homocysteine + 2 H(+)</text>
        <dbReference type="Rhea" id="RHEA:37067"/>
        <dbReference type="Rhea" id="RHEA-COMP:10375"/>
        <dbReference type="Rhea" id="RHEA-COMP:10376"/>
        <dbReference type="Rhea" id="RHEA-COMP:14737"/>
        <dbReference type="Rhea" id="RHEA-COMP:14739"/>
        <dbReference type="ChEBI" id="CHEBI:13193"/>
        <dbReference type="ChEBI" id="CHEBI:15378"/>
        <dbReference type="ChEBI" id="CHEBI:17319"/>
        <dbReference type="ChEBI" id="CHEBI:17499"/>
        <dbReference type="ChEBI" id="CHEBI:29917"/>
        <dbReference type="ChEBI" id="CHEBI:57844"/>
        <dbReference type="ChEBI" id="CHEBI:57856"/>
        <dbReference type="ChEBI" id="CHEBI:59789"/>
        <dbReference type="ChEBI" id="CHEBI:64428"/>
        <dbReference type="ChEBI" id="CHEBI:74415"/>
        <dbReference type="ChEBI" id="CHEBI:74417"/>
        <dbReference type="EC" id="2.8.4.3"/>
    </reaction>
</comment>
<comment type="cofactor">
    <cofactor evidence="1">
        <name>[4Fe-4S] cluster</name>
        <dbReference type="ChEBI" id="CHEBI:49883"/>
    </cofactor>
    <text evidence="1">Binds 2 [4Fe-4S] clusters. One cluster is coordinated with 3 cysteines and an exchangeable S-adenosyl-L-methionine.</text>
</comment>
<comment type="subunit">
    <text evidence="1">Monomer.</text>
</comment>
<comment type="subcellular location">
    <subcellularLocation>
        <location evidence="1">Cytoplasm</location>
    </subcellularLocation>
</comment>
<comment type="similarity">
    <text evidence="1">Belongs to the methylthiotransferase family. MiaB subfamily.</text>
</comment>
<protein>
    <recommendedName>
        <fullName evidence="1">tRNA-2-methylthio-N(6)-dimethylallyladenosine synthase</fullName>
        <ecNumber evidence="1">2.8.4.3</ecNumber>
    </recommendedName>
    <alternativeName>
        <fullName evidence="1">(Dimethylallyl)adenosine tRNA methylthiotransferase MiaB</fullName>
    </alternativeName>
    <alternativeName>
        <fullName evidence="1">tRNA-i(6)A37 methylthiotransferase</fullName>
    </alternativeName>
</protein>
<dbReference type="EC" id="2.8.4.3" evidence="1"/>
<dbReference type="EMBL" id="CP000474">
    <property type="protein sequence ID" value="ABM06679.1"/>
    <property type="molecule type" value="Genomic_DNA"/>
</dbReference>
<dbReference type="SMR" id="A1R550"/>
<dbReference type="STRING" id="290340.AAur_1596"/>
<dbReference type="KEGG" id="aau:AAur_1596"/>
<dbReference type="eggNOG" id="COG0621">
    <property type="taxonomic scope" value="Bacteria"/>
</dbReference>
<dbReference type="HOGENOM" id="CLU_018697_2_2_11"/>
<dbReference type="OrthoDB" id="9805215at2"/>
<dbReference type="Proteomes" id="UP000000637">
    <property type="component" value="Chromosome"/>
</dbReference>
<dbReference type="GO" id="GO:0005829">
    <property type="term" value="C:cytosol"/>
    <property type="evidence" value="ECO:0007669"/>
    <property type="project" value="TreeGrafter"/>
</dbReference>
<dbReference type="GO" id="GO:0051539">
    <property type="term" value="F:4 iron, 4 sulfur cluster binding"/>
    <property type="evidence" value="ECO:0007669"/>
    <property type="project" value="UniProtKB-UniRule"/>
</dbReference>
<dbReference type="GO" id="GO:0046872">
    <property type="term" value="F:metal ion binding"/>
    <property type="evidence" value="ECO:0007669"/>
    <property type="project" value="UniProtKB-KW"/>
</dbReference>
<dbReference type="GO" id="GO:0035597">
    <property type="term" value="F:N6-isopentenyladenosine methylthiotransferase activity"/>
    <property type="evidence" value="ECO:0007669"/>
    <property type="project" value="TreeGrafter"/>
</dbReference>
<dbReference type="CDD" id="cd01335">
    <property type="entry name" value="Radical_SAM"/>
    <property type="match status" value="1"/>
</dbReference>
<dbReference type="FunFam" id="3.40.50.12160:FF:000003">
    <property type="entry name" value="CDK5 regulatory subunit-associated protein 1"/>
    <property type="match status" value="1"/>
</dbReference>
<dbReference type="FunFam" id="3.80.30.20:FF:000001">
    <property type="entry name" value="tRNA-2-methylthio-N(6)-dimethylallyladenosine synthase 2"/>
    <property type="match status" value="1"/>
</dbReference>
<dbReference type="Gene3D" id="3.40.50.12160">
    <property type="entry name" value="Methylthiotransferase, N-terminal domain"/>
    <property type="match status" value="1"/>
</dbReference>
<dbReference type="Gene3D" id="3.80.30.20">
    <property type="entry name" value="tm_1862 like domain"/>
    <property type="match status" value="1"/>
</dbReference>
<dbReference type="HAMAP" id="MF_01864">
    <property type="entry name" value="tRNA_metthiotr_MiaB"/>
    <property type="match status" value="1"/>
</dbReference>
<dbReference type="InterPro" id="IPR006638">
    <property type="entry name" value="Elp3/MiaA/NifB-like_rSAM"/>
</dbReference>
<dbReference type="InterPro" id="IPR005839">
    <property type="entry name" value="Methylthiotransferase"/>
</dbReference>
<dbReference type="InterPro" id="IPR020612">
    <property type="entry name" value="Methylthiotransferase_CS"/>
</dbReference>
<dbReference type="InterPro" id="IPR013848">
    <property type="entry name" value="Methylthiotransferase_N"/>
</dbReference>
<dbReference type="InterPro" id="IPR038135">
    <property type="entry name" value="Methylthiotransferase_N_sf"/>
</dbReference>
<dbReference type="InterPro" id="IPR006463">
    <property type="entry name" value="MiaB_methiolase"/>
</dbReference>
<dbReference type="InterPro" id="IPR007197">
    <property type="entry name" value="rSAM"/>
</dbReference>
<dbReference type="InterPro" id="IPR023404">
    <property type="entry name" value="rSAM_horseshoe"/>
</dbReference>
<dbReference type="InterPro" id="IPR002792">
    <property type="entry name" value="TRAM_dom"/>
</dbReference>
<dbReference type="NCBIfam" id="TIGR01574">
    <property type="entry name" value="miaB-methiolase"/>
    <property type="match status" value="1"/>
</dbReference>
<dbReference type="NCBIfam" id="TIGR00089">
    <property type="entry name" value="MiaB/RimO family radical SAM methylthiotransferase"/>
    <property type="match status" value="1"/>
</dbReference>
<dbReference type="PANTHER" id="PTHR43020">
    <property type="entry name" value="CDK5 REGULATORY SUBUNIT-ASSOCIATED PROTEIN 1"/>
    <property type="match status" value="1"/>
</dbReference>
<dbReference type="PANTHER" id="PTHR43020:SF2">
    <property type="entry name" value="MITOCHONDRIAL TRNA METHYLTHIOTRANSFERASE CDK5RAP1"/>
    <property type="match status" value="1"/>
</dbReference>
<dbReference type="Pfam" id="PF04055">
    <property type="entry name" value="Radical_SAM"/>
    <property type="match status" value="1"/>
</dbReference>
<dbReference type="Pfam" id="PF00919">
    <property type="entry name" value="UPF0004"/>
    <property type="match status" value="1"/>
</dbReference>
<dbReference type="SFLD" id="SFLDF00273">
    <property type="entry name" value="(dimethylallyl)adenosine_tRNA"/>
    <property type="match status" value="1"/>
</dbReference>
<dbReference type="SFLD" id="SFLDG01082">
    <property type="entry name" value="B12-binding_domain_containing"/>
    <property type="match status" value="1"/>
</dbReference>
<dbReference type="SFLD" id="SFLDS00029">
    <property type="entry name" value="Radical_SAM"/>
    <property type="match status" value="1"/>
</dbReference>
<dbReference type="SMART" id="SM00729">
    <property type="entry name" value="Elp3"/>
    <property type="match status" value="1"/>
</dbReference>
<dbReference type="SUPFAM" id="SSF102114">
    <property type="entry name" value="Radical SAM enzymes"/>
    <property type="match status" value="1"/>
</dbReference>
<dbReference type="PROSITE" id="PS51449">
    <property type="entry name" value="MTTASE_N"/>
    <property type="match status" value="1"/>
</dbReference>
<dbReference type="PROSITE" id="PS01278">
    <property type="entry name" value="MTTASE_RADICAL"/>
    <property type="match status" value="1"/>
</dbReference>
<dbReference type="PROSITE" id="PS51918">
    <property type="entry name" value="RADICAL_SAM"/>
    <property type="match status" value="1"/>
</dbReference>
<dbReference type="PROSITE" id="PS50926">
    <property type="entry name" value="TRAM"/>
    <property type="match status" value="1"/>
</dbReference>
<evidence type="ECO:0000255" key="1">
    <source>
        <dbReference type="HAMAP-Rule" id="MF_01864"/>
    </source>
</evidence>
<evidence type="ECO:0000255" key="2">
    <source>
        <dbReference type="PROSITE-ProRule" id="PRU01266"/>
    </source>
</evidence>
<evidence type="ECO:0000256" key="3">
    <source>
        <dbReference type="SAM" id="MobiDB-lite"/>
    </source>
</evidence>
<reference key="1">
    <citation type="journal article" date="2006" name="PLoS Genet.">
        <title>Secrets of soil survival revealed by the genome sequence of Arthrobacter aurescens TC1.</title>
        <authorList>
            <person name="Mongodin E.F."/>
            <person name="Shapir N."/>
            <person name="Daugherty S.C."/>
            <person name="DeBoy R.T."/>
            <person name="Emerson J.B."/>
            <person name="Shvartzbeyn A."/>
            <person name="Radune D."/>
            <person name="Vamathevan J."/>
            <person name="Riggs F."/>
            <person name="Grinberg V."/>
            <person name="Khouri H.M."/>
            <person name="Wackett L.P."/>
            <person name="Nelson K.E."/>
            <person name="Sadowsky M.J."/>
        </authorList>
    </citation>
    <scope>NUCLEOTIDE SEQUENCE [LARGE SCALE GENOMIC DNA]</scope>
    <source>
        <strain>TC1</strain>
    </source>
</reference>
<keyword id="KW-0004">4Fe-4S</keyword>
<keyword id="KW-0963">Cytoplasm</keyword>
<keyword id="KW-0408">Iron</keyword>
<keyword id="KW-0411">Iron-sulfur</keyword>
<keyword id="KW-0479">Metal-binding</keyword>
<keyword id="KW-0949">S-adenosyl-L-methionine</keyword>
<keyword id="KW-0808">Transferase</keyword>
<keyword id="KW-0819">tRNA processing</keyword>